<name>PDE6D_CULQU</name>
<organism>
    <name type="scientific">Culex quinquefasciatus</name>
    <name type="common">Southern house mosquito</name>
    <name type="synonym">Culex pungens</name>
    <dbReference type="NCBI Taxonomy" id="7176"/>
    <lineage>
        <taxon>Eukaryota</taxon>
        <taxon>Metazoa</taxon>
        <taxon>Ecdysozoa</taxon>
        <taxon>Arthropoda</taxon>
        <taxon>Hexapoda</taxon>
        <taxon>Insecta</taxon>
        <taxon>Pterygota</taxon>
        <taxon>Neoptera</taxon>
        <taxon>Endopterygota</taxon>
        <taxon>Diptera</taxon>
        <taxon>Nematocera</taxon>
        <taxon>Culicoidea</taxon>
        <taxon>Culicidae</taxon>
        <taxon>Culicinae</taxon>
        <taxon>Culicini</taxon>
        <taxon>Culex</taxon>
        <taxon>Culex</taxon>
    </lineage>
</organism>
<reference evidence="3" key="1">
    <citation type="submission" date="2007-03" db="EMBL/GenBank/DDBJ databases">
        <title>Annotation of Culex pipiens quinquefasciatus.</title>
        <authorList>
            <consortium name="The Broad Institute Genome Sequencing Platform"/>
            <person name="Atkinson P.W."/>
            <person name="Hemingway J."/>
            <person name="Christensen B.M."/>
            <person name="Higgs S."/>
            <person name="Kodira C.D."/>
            <person name="Hannick L.I."/>
            <person name="Megy K."/>
            <person name="O'Leary S.B."/>
            <person name="Pearson M."/>
            <person name="Haas B.J."/>
            <person name="Mauceli E."/>
            <person name="Wortman J.R."/>
            <person name="Lee N.H."/>
            <person name="Guigo R."/>
            <person name="Stanke M."/>
            <person name="Alvarado L."/>
            <person name="Amedeo P."/>
            <person name="Antoine C.H."/>
            <person name="Arensburger P."/>
            <person name="Bidwell S.L."/>
            <person name="Crawford M."/>
            <person name="Camaro F."/>
            <person name="Devon K."/>
            <person name="Engels R."/>
            <person name="Hammond M."/>
            <person name="Howarth C."/>
            <person name="Koehrsen M."/>
            <person name="Lawson D."/>
            <person name="Montgomery P."/>
            <person name="Nene V."/>
            <person name="Nusbaum C."/>
            <person name="Puiu D."/>
            <person name="Romero-Severson J."/>
            <person name="Severson D.W."/>
            <person name="Shumway M."/>
            <person name="Sisk P."/>
            <person name="Stolte C."/>
            <person name="Zeng Q."/>
            <person name="Eisenstadt E."/>
            <person name="Fraser-Liggett C.M."/>
            <person name="Strausberg R."/>
            <person name="Galagan J."/>
            <person name="Birren B."/>
            <person name="Collins F.H."/>
        </authorList>
    </citation>
    <scope>NUCLEOTIDE SEQUENCE [LARGE SCALE GENOMIC DNA]</scope>
    <source>
        <strain evidence="3">JHB</strain>
    </source>
</reference>
<keyword id="KW-0140">cGMP</keyword>
<keyword id="KW-0963">Cytoplasm</keyword>
<keyword id="KW-0539">Nucleus</keyword>
<keyword id="KW-1185">Reference proteome</keyword>
<protein>
    <recommendedName>
        <fullName>Probable cGMP 3',5'-cyclic phosphodiesterase subunit delta</fullName>
    </recommendedName>
</protein>
<gene>
    <name evidence="1" type="primary">PrBP</name>
    <name type="ORF">CPIJ010144</name>
</gene>
<proteinExistence type="inferred from homology"/>
<accession>B0WS18</accession>
<sequence length="151" mass="17472">MGTDDVAKSEKIREGFQINWLILRDADTGKILWQENKDFSCPDVEHEARVPIKILDLRAVSREINFSTVEAMENFRLDQKVLFKGRIMEEWFFEMGWVSPNTTNTWQSTIEAAPESQMMPAKVLNGNVTIETSFFDGETLISKSVVRLYYI</sequence>
<evidence type="ECO:0000250" key="1">
    <source>
        <dbReference type="UniProtKB" id="Q9VLJ0"/>
    </source>
</evidence>
<evidence type="ECO:0000255" key="2"/>
<evidence type="ECO:0000312" key="3">
    <source>
        <dbReference type="EMBL" id="EDS33636.1"/>
    </source>
</evidence>
<feature type="chain" id="PRO_0000363672" description="Probable cGMP 3',5'-cyclic phosphodiesterase subunit delta">
    <location>
        <begin position="1"/>
        <end position="151"/>
    </location>
</feature>
<dbReference type="EMBL" id="DS232063">
    <property type="protein sequence ID" value="EDS33636.1"/>
    <property type="molecule type" value="Genomic_DNA"/>
</dbReference>
<dbReference type="SMR" id="B0WS18"/>
<dbReference type="FunCoup" id="B0WS18">
    <property type="interactions" value="1474"/>
</dbReference>
<dbReference type="STRING" id="7176.B0WS18"/>
<dbReference type="EnsemblMetazoa" id="CPIJ010144-RA">
    <property type="protein sequence ID" value="CPIJ010144-PA"/>
    <property type="gene ID" value="CPIJ010144"/>
</dbReference>
<dbReference type="EnsemblMetazoa" id="CQUJHB013366.R20770">
    <property type="protein sequence ID" value="CQUJHB013366.P20770"/>
    <property type="gene ID" value="CQUJHB013366"/>
</dbReference>
<dbReference type="EnsemblMetazoa" id="XM_001851450.2">
    <property type="protein sequence ID" value="XP_001851502.1"/>
    <property type="gene ID" value="LOC6042377"/>
</dbReference>
<dbReference type="GeneID" id="6042377"/>
<dbReference type="KEGG" id="cqu:CpipJ_CPIJ010144"/>
<dbReference type="VEuPathDB" id="VectorBase:CPIJ010144"/>
<dbReference type="VEuPathDB" id="VectorBase:CQUJHB013366"/>
<dbReference type="eggNOG" id="KOG4038">
    <property type="taxonomic scope" value="Eukaryota"/>
</dbReference>
<dbReference type="HOGENOM" id="CLU_119682_0_0_1"/>
<dbReference type="InParanoid" id="B0WS18"/>
<dbReference type="OMA" id="STNTWQN"/>
<dbReference type="OrthoDB" id="10248777at2759"/>
<dbReference type="PhylomeDB" id="B0WS18"/>
<dbReference type="Proteomes" id="UP000002320">
    <property type="component" value="Unassembled WGS sequence"/>
</dbReference>
<dbReference type="GO" id="GO:0005737">
    <property type="term" value="C:cytoplasm"/>
    <property type="evidence" value="ECO:0000250"/>
    <property type="project" value="UniProtKB"/>
</dbReference>
<dbReference type="GO" id="GO:0005634">
    <property type="term" value="C:nucleus"/>
    <property type="evidence" value="ECO:0000250"/>
    <property type="project" value="UniProtKB"/>
</dbReference>
<dbReference type="GO" id="GO:0050953">
    <property type="term" value="P:sensory perception of light stimulus"/>
    <property type="evidence" value="ECO:0007669"/>
    <property type="project" value="InterPro"/>
</dbReference>
<dbReference type="FunFam" id="2.70.50.40:FF:000002">
    <property type="entry name" value="Retinal rod rhodopsin-sensitive cGMP 3',5'-cyclic phosphodiesterase subunit delta"/>
    <property type="match status" value="1"/>
</dbReference>
<dbReference type="Gene3D" id="2.70.50.40">
    <property type="entry name" value="GMP phosphodiesterase, delta subunit"/>
    <property type="match status" value="1"/>
</dbReference>
<dbReference type="InterPro" id="IPR014756">
    <property type="entry name" value="Ig_E-set"/>
</dbReference>
<dbReference type="InterPro" id="IPR008015">
    <property type="entry name" value="PDED_dom"/>
</dbReference>
<dbReference type="InterPro" id="IPR037036">
    <property type="entry name" value="PDED_dom_sf"/>
</dbReference>
<dbReference type="InterPro" id="IPR017287">
    <property type="entry name" value="Rhodop-sen_GMP-Pdiesterase_dsu"/>
</dbReference>
<dbReference type="PANTHER" id="PTHR12976">
    <property type="entry name" value="RETINAL ROD RHODOPSIN-SENSITIVE CGMP 3',5'-CYCLIC PHOSPHODIESTERASE DELTA-SUBUNIT"/>
    <property type="match status" value="1"/>
</dbReference>
<dbReference type="PANTHER" id="PTHR12976:SF0">
    <property type="entry name" value="RETINAL ROD RHODOPSIN-SENSITIVE CGMP 3',5'-CYCLIC PHOSPHODIESTERASE SUBUNIT DELTA"/>
    <property type="match status" value="1"/>
</dbReference>
<dbReference type="Pfam" id="PF05351">
    <property type="entry name" value="GMP_PDE_delta"/>
    <property type="match status" value="1"/>
</dbReference>
<dbReference type="PIRSF" id="PIRSF037825">
    <property type="entry name" value="GMP-Pdiesterase_delta"/>
    <property type="match status" value="1"/>
</dbReference>
<dbReference type="SUPFAM" id="SSF81296">
    <property type="entry name" value="E set domains"/>
    <property type="match status" value="1"/>
</dbReference>
<comment type="subunit">
    <text evidence="1">Interacts with Pde6.</text>
</comment>
<comment type="subcellular location">
    <subcellularLocation>
        <location evidence="1">Nucleus</location>
    </subcellularLocation>
    <subcellularLocation>
        <location evidence="1">Cytoplasm</location>
    </subcellularLocation>
</comment>
<comment type="similarity">
    <text evidence="2">Belongs to the PDE6D/unc-119 family.</text>
</comment>